<protein>
    <recommendedName>
        <fullName>Probable ATP-dependent RNA helicase spindle-E</fullName>
        <ecNumber>3.6.4.13</ecNumber>
    </recommendedName>
</protein>
<feature type="chain" id="PRO_0000391912" description="Probable ATP-dependent RNA helicase spindle-E">
    <location>
        <begin position="1"/>
        <end position="1396"/>
    </location>
</feature>
<feature type="domain" description="Helicase ATP-binding" evidence="3">
    <location>
        <begin position="68"/>
        <end position="234"/>
    </location>
</feature>
<feature type="domain" description="Helicase C-terminal" evidence="4">
    <location>
        <begin position="292"/>
        <end position="468"/>
    </location>
</feature>
<feature type="domain" description="Tudor" evidence="2">
    <location>
        <begin position="885"/>
        <end position="950"/>
    </location>
</feature>
<feature type="region of interest" description="Disordered" evidence="5">
    <location>
        <begin position="1"/>
        <end position="34"/>
    </location>
</feature>
<feature type="short sequence motif" description="DEAH box">
    <location>
        <begin position="180"/>
        <end position="183"/>
    </location>
</feature>
<feature type="compositionally biased region" description="Acidic residues" evidence="5">
    <location>
        <begin position="16"/>
        <end position="30"/>
    </location>
</feature>
<feature type="binding site" evidence="3">
    <location>
        <begin position="81"/>
        <end position="88"/>
    </location>
    <ligand>
        <name>ATP</name>
        <dbReference type="ChEBI" id="CHEBI:30616"/>
    </ligand>
</feature>
<name>SPNE_CULQU</name>
<evidence type="ECO:0000250" key="1"/>
<evidence type="ECO:0000255" key="2">
    <source>
        <dbReference type="PROSITE-ProRule" id="PRU00211"/>
    </source>
</evidence>
<evidence type="ECO:0000255" key="3">
    <source>
        <dbReference type="PROSITE-ProRule" id="PRU00541"/>
    </source>
</evidence>
<evidence type="ECO:0000255" key="4">
    <source>
        <dbReference type="PROSITE-ProRule" id="PRU00542"/>
    </source>
</evidence>
<evidence type="ECO:0000256" key="5">
    <source>
        <dbReference type="SAM" id="MobiDB-lite"/>
    </source>
</evidence>
<evidence type="ECO:0000305" key="6"/>
<accession>B0XDC4</accession>
<organism>
    <name type="scientific">Culex quinquefasciatus</name>
    <name type="common">Southern house mosquito</name>
    <name type="synonym">Culex pungens</name>
    <dbReference type="NCBI Taxonomy" id="7176"/>
    <lineage>
        <taxon>Eukaryota</taxon>
        <taxon>Metazoa</taxon>
        <taxon>Ecdysozoa</taxon>
        <taxon>Arthropoda</taxon>
        <taxon>Hexapoda</taxon>
        <taxon>Insecta</taxon>
        <taxon>Pterygota</taxon>
        <taxon>Neoptera</taxon>
        <taxon>Endopterygota</taxon>
        <taxon>Diptera</taxon>
        <taxon>Nematocera</taxon>
        <taxon>Culicoidea</taxon>
        <taxon>Culicidae</taxon>
        <taxon>Culicinae</taxon>
        <taxon>Culicini</taxon>
        <taxon>Culex</taxon>
        <taxon>Culex</taxon>
    </lineage>
</organism>
<sequence>MDEAAGPSTSRTSNLEDVDDEGASLAEEDEEHTKALKAKEMMAPLFQRYNFTMKKNDLPINWNKPEILDKIRSNAVVVLQGATGCGKTTQVPQYLLEEAFERKEYCNIIVTQPRKIAAISIARRVAQERKCDLGTLVGYKVGLKEQHNEDTRLLYVTTGVLLQSLINSKTMATYTHVILDEVHEREVDMDFLLIVVRRLLSTNSKKTKVILMSATIDAKGFSEYFKIPKKSGYLSAPVISVERPRLHVVQEFYFDDLEKLKVDFQIDYEAPGISEQMYNIAAKLVVVCDHLKGQEFGDSLEYKPSIIIFLPGINEIEKMEGALEKLIASIQNAAQRPNLLIMKLHSTLPADDQTAVFRKPGPNQRKVILSTNIAESSITVPDIKFVIDFCLQRILVTDTLTNFSTLRTEWASKSNCIQRAGRAGRLMSGRVYRLVDRRFFENNMDVSTSPEILRCPLETVVLKAKLLEMGTPPSILALAMAPPNLDDIRNTILLLKEVGAMLRTVKGNYDQLDGDLTYLGRIMSKLPLDIRISKLIMLGYIFSVMEEAVTIGAGMNVKNIFLNQNSVKTYSQKMYWADGSGSDAIAILNAYTAWKSRQEQAGDTADMYNWARRMSLDRKSLIDMAELIHEVKDRLNRSGLKPVSGPNRVVWNAREKTVILKVILAGAFYPNYFIPMSVGGKELMERQSFTELGGRDPCNTVFFTGFDHERYIGPLYTVQIKKILSEGDYSKHQAMKVMYDRTTNRIFVTFLGTTDERDQRGSFMPGKVHADVYRAIKLRKLGARNRITEIRTMRQRDAIDYATSAGLGHWEDANGWVPRRKIVRNAHLSVLPPIFREKVVCQVTHVVHPNKFFLRPEDNRNKDIFREIHTQLNARQLHPFPADANFAMGQMVAAPVQENQETYARAVLRSYRNVRTTGSVSWTVFFIDYGHTAAMEETAFRQLDDSLGQLKDIPPRAFEATLTEIQPSAIISPQGSWTTESIHRFKELVLGKIFVAKVYSVVGVVASVELSRDEIRMNSELIRLKYAQYAEESYISKLDHDHRERKQREIMMDENLRNEVYRSAELTQNTYEDDELEDVNPPEDKLRCKVVLSGPHSPLETSASATIRSSVMKPVSIESDSVNSILLDSNPQDTHEKLLVAGGVNEQGNRLVLRQTSVMPNIPGFGAIMSLIFCPTAQLKKDKDETRVVTVLSGLGYDPSTGEALYPEHDMALTLDVVLNDDDITNINALRYTMDSILHTGEGQTDPKFGDASIQKLKLQVKQYIIKILEHERRFLDLRHAPNDYNWRCDLNLTAGSSSSKKMKGDFNIYDKKAIFPLLEPLNLLPVSASQLTFLKKHCHELHKLAHTDVQLPRHGITCQLCNNVLETLPQLRIHLYSKLHRDRESQIKYRSPQMY</sequence>
<keyword id="KW-0067">ATP-binding</keyword>
<keyword id="KW-0963">Cytoplasm</keyword>
<keyword id="KW-0217">Developmental protein</keyword>
<keyword id="KW-0221">Differentiation</keyword>
<keyword id="KW-0347">Helicase</keyword>
<keyword id="KW-0378">Hydrolase</keyword>
<keyword id="KW-0469">Meiosis</keyword>
<keyword id="KW-0547">Nucleotide-binding</keyword>
<keyword id="KW-1185">Reference proteome</keyword>
<keyword id="KW-0943">RNA-mediated gene silencing</keyword>
<keyword id="KW-0744">Spermatogenesis</keyword>
<proteinExistence type="inferred from homology"/>
<gene>
    <name type="primary">spn-E</name>
    <name type="ORF">CPIJ017541</name>
</gene>
<reference key="1">
    <citation type="submission" date="2007-03" db="EMBL/GenBank/DDBJ databases">
        <title>Annotation of Culex pipiens quinquefasciatus.</title>
        <authorList>
            <consortium name="The Broad Institute Genome Sequencing Platform"/>
            <person name="Atkinson P.W."/>
            <person name="Hemingway J."/>
            <person name="Christensen B.M."/>
            <person name="Higgs S."/>
            <person name="Kodira C.D."/>
            <person name="Hannick L.I."/>
            <person name="Megy K."/>
            <person name="O'Leary S.B."/>
            <person name="Pearson M."/>
            <person name="Haas B.J."/>
            <person name="Mauceli E."/>
            <person name="Wortman J.R."/>
            <person name="Lee N.H."/>
            <person name="Guigo R."/>
            <person name="Stanke M."/>
            <person name="Alvarado L."/>
            <person name="Amedeo P."/>
            <person name="Antoine C.H."/>
            <person name="Arensburger P."/>
            <person name="Bidwell S.L."/>
            <person name="Crawford M."/>
            <person name="Camaro F."/>
            <person name="Devon K."/>
            <person name="Engels R."/>
            <person name="Hammond M."/>
            <person name="Howarth C."/>
            <person name="Koehrsen M."/>
            <person name="Lawson D."/>
            <person name="Montgomery P."/>
            <person name="Nene V."/>
            <person name="Nusbaum C."/>
            <person name="Puiu D."/>
            <person name="Romero-Severson J."/>
            <person name="Severson D.W."/>
            <person name="Shumway M."/>
            <person name="Sisk P."/>
            <person name="Stolte C."/>
            <person name="Zeng Q."/>
            <person name="Eisenstadt E."/>
            <person name="Fraser-Liggett C.M."/>
            <person name="Strausberg R."/>
            <person name="Galagan J."/>
            <person name="Birren B."/>
            <person name="Collins F.H."/>
        </authorList>
    </citation>
    <scope>NUCLEOTIDE SEQUENCE [LARGE SCALE GENOMIC DNA]</scope>
    <source>
        <strain>JHB</strain>
    </source>
</reference>
<dbReference type="EC" id="3.6.4.13"/>
<dbReference type="EMBL" id="DS232752">
    <property type="protein sequence ID" value="EDS45402.1"/>
    <property type="molecule type" value="Genomic_DNA"/>
</dbReference>
<dbReference type="RefSeq" id="XP_001867646.1">
    <property type="nucleotide sequence ID" value="XM_001867611.1"/>
</dbReference>
<dbReference type="SMR" id="B0XDC4"/>
<dbReference type="FunCoup" id="B0XDC4">
    <property type="interactions" value="198"/>
</dbReference>
<dbReference type="STRING" id="7176.B0XDC4"/>
<dbReference type="EnsemblMetazoa" id="CPIJ017541-RA">
    <property type="protein sequence ID" value="CPIJ017541-PA"/>
    <property type="gene ID" value="CPIJ017541"/>
</dbReference>
<dbReference type="EnsemblMetazoa" id="CQUJHB009375.R14458">
    <property type="protein sequence ID" value="CQUJHB009375.P14458"/>
    <property type="gene ID" value="CQUJHB009375"/>
</dbReference>
<dbReference type="EnsemblMetazoa" id="XM_038251917.1">
    <property type="protein sequence ID" value="XP_038107845.1"/>
    <property type="gene ID" value="LOC6051164"/>
</dbReference>
<dbReference type="KEGG" id="cqu:CpipJ_CPIJ017541"/>
<dbReference type="VEuPathDB" id="VectorBase:CPIJ017541"/>
<dbReference type="VEuPathDB" id="VectorBase:CQUJHB009375"/>
<dbReference type="eggNOG" id="KOG0920">
    <property type="taxonomic scope" value="Eukaryota"/>
</dbReference>
<dbReference type="HOGENOM" id="CLU_002601_1_0_1"/>
<dbReference type="InParanoid" id="B0XDC4"/>
<dbReference type="OMA" id="QRSAYCS"/>
<dbReference type="OrthoDB" id="66977at2759"/>
<dbReference type="PhylomeDB" id="B0XDC4"/>
<dbReference type="Proteomes" id="UP000002320">
    <property type="component" value="Unassembled WGS sequence"/>
</dbReference>
<dbReference type="GO" id="GO:0005737">
    <property type="term" value="C:cytoplasm"/>
    <property type="evidence" value="ECO:0007669"/>
    <property type="project" value="UniProtKB-SubCell"/>
</dbReference>
<dbReference type="GO" id="GO:0005524">
    <property type="term" value="F:ATP binding"/>
    <property type="evidence" value="ECO:0007669"/>
    <property type="project" value="UniProtKB-KW"/>
</dbReference>
<dbReference type="GO" id="GO:0016887">
    <property type="term" value="F:ATP hydrolysis activity"/>
    <property type="evidence" value="ECO:0007669"/>
    <property type="project" value="RHEA"/>
</dbReference>
<dbReference type="GO" id="GO:0003723">
    <property type="term" value="F:RNA binding"/>
    <property type="evidence" value="ECO:0007669"/>
    <property type="project" value="TreeGrafter"/>
</dbReference>
<dbReference type="GO" id="GO:0003724">
    <property type="term" value="F:RNA helicase activity"/>
    <property type="evidence" value="ECO:0007669"/>
    <property type="project" value="UniProtKB-EC"/>
</dbReference>
<dbReference type="GO" id="GO:0030154">
    <property type="term" value="P:cell differentiation"/>
    <property type="evidence" value="ECO:0007669"/>
    <property type="project" value="UniProtKB-KW"/>
</dbReference>
<dbReference type="GO" id="GO:0051321">
    <property type="term" value="P:meiotic cell cycle"/>
    <property type="evidence" value="ECO:0007669"/>
    <property type="project" value="UniProtKB-KW"/>
</dbReference>
<dbReference type="GO" id="GO:0031047">
    <property type="term" value="P:regulatory ncRNA-mediated gene silencing"/>
    <property type="evidence" value="ECO:0007669"/>
    <property type="project" value="UniProtKB-KW"/>
</dbReference>
<dbReference type="GO" id="GO:0007283">
    <property type="term" value="P:spermatogenesis"/>
    <property type="evidence" value="ECO:0007669"/>
    <property type="project" value="UniProtKB-KW"/>
</dbReference>
<dbReference type="CDD" id="cd18791">
    <property type="entry name" value="SF2_C_RHA"/>
    <property type="match status" value="1"/>
</dbReference>
<dbReference type="FunFam" id="3.40.50.300:FF:001676">
    <property type="entry name" value="DExH-box ATP-dependent RNA helicase DExH7 chloroplastic"/>
    <property type="match status" value="1"/>
</dbReference>
<dbReference type="Gene3D" id="1.20.120.1080">
    <property type="match status" value="1"/>
</dbReference>
<dbReference type="Gene3D" id="2.30.30.140">
    <property type="match status" value="1"/>
</dbReference>
<dbReference type="Gene3D" id="2.40.50.90">
    <property type="match status" value="1"/>
</dbReference>
<dbReference type="Gene3D" id="3.40.50.300">
    <property type="entry name" value="P-loop containing nucleotide triphosphate hydrolases"/>
    <property type="match status" value="2"/>
</dbReference>
<dbReference type="InterPro" id="IPR011545">
    <property type="entry name" value="DEAD/DEAH_box_helicase_dom"/>
</dbReference>
<dbReference type="InterPro" id="IPR007502">
    <property type="entry name" value="Helicase-assoc_dom"/>
</dbReference>
<dbReference type="InterPro" id="IPR014001">
    <property type="entry name" value="Helicase_ATP-bd"/>
</dbReference>
<dbReference type="InterPro" id="IPR001650">
    <property type="entry name" value="Helicase_C-like"/>
</dbReference>
<dbReference type="InterPro" id="IPR027417">
    <property type="entry name" value="P-loop_NTPase"/>
</dbReference>
<dbReference type="InterPro" id="IPR035437">
    <property type="entry name" value="SNase_OB-fold_sf"/>
</dbReference>
<dbReference type="InterPro" id="IPR002999">
    <property type="entry name" value="Tudor"/>
</dbReference>
<dbReference type="InterPro" id="IPR013087">
    <property type="entry name" value="Znf_C2H2_type"/>
</dbReference>
<dbReference type="PANTHER" id="PTHR18934">
    <property type="entry name" value="ATP-DEPENDENT RNA HELICASE"/>
    <property type="match status" value="1"/>
</dbReference>
<dbReference type="PANTHER" id="PTHR18934:SF113">
    <property type="entry name" value="ATP-DEPENDENT RNA HELICASE TDRD9"/>
    <property type="match status" value="1"/>
</dbReference>
<dbReference type="Pfam" id="PF00270">
    <property type="entry name" value="DEAD"/>
    <property type="match status" value="1"/>
</dbReference>
<dbReference type="Pfam" id="PF21010">
    <property type="entry name" value="HA2_C"/>
    <property type="match status" value="1"/>
</dbReference>
<dbReference type="Pfam" id="PF00271">
    <property type="entry name" value="Helicase_C"/>
    <property type="match status" value="1"/>
</dbReference>
<dbReference type="Pfam" id="PF00567">
    <property type="entry name" value="TUDOR"/>
    <property type="match status" value="1"/>
</dbReference>
<dbReference type="SMART" id="SM00487">
    <property type="entry name" value="DEXDc"/>
    <property type="match status" value="1"/>
</dbReference>
<dbReference type="SMART" id="SM00847">
    <property type="entry name" value="HA2"/>
    <property type="match status" value="1"/>
</dbReference>
<dbReference type="SMART" id="SM00490">
    <property type="entry name" value="HELICc"/>
    <property type="match status" value="1"/>
</dbReference>
<dbReference type="SUPFAM" id="SSF52540">
    <property type="entry name" value="P-loop containing nucleoside triphosphate hydrolases"/>
    <property type="match status" value="1"/>
</dbReference>
<dbReference type="SUPFAM" id="SSF63748">
    <property type="entry name" value="Tudor/PWWP/MBT"/>
    <property type="match status" value="1"/>
</dbReference>
<dbReference type="PROSITE" id="PS51192">
    <property type="entry name" value="HELICASE_ATP_BIND_1"/>
    <property type="match status" value="1"/>
</dbReference>
<dbReference type="PROSITE" id="PS51194">
    <property type="entry name" value="HELICASE_CTER"/>
    <property type="match status" value="1"/>
</dbReference>
<dbReference type="PROSITE" id="PS50304">
    <property type="entry name" value="TUDOR"/>
    <property type="match status" value="1"/>
</dbReference>
<comment type="function">
    <text evidence="1">Probable ATP-binding RNA helicase which plays a central role during gametogenesis by repressing transposable elements and preventing their mobilization, which is essential for the germline integrity. Acts via the piRNA metabolic process, which mediates the repression of transposable elements during meiosis by forming complexes composed of piRNAs and Piwi proteins and govern the methylation and subsequent repression of transposons (By similarity).</text>
</comment>
<comment type="catalytic activity">
    <reaction>
        <text>ATP + H2O = ADP + phosphate + H(+)</text>
        <dbReference type="Rhea" id="RHEA:13065"/>
        <dbReference type="ChEBI" id="CHEBI:15377"/>
        <dbReference type="ChEBI" id="CHEBI:15378"/>
        <dbReference type="ChEBI" id="CHEBI:30616"/>
        <dbReference type="ChEBI" id="CHEBI:43474"/>
        <dbReference type="ChEBI" id="CHEBI:456216"/>
        <dbReference type="EC" id="3.6.4.13"/>
    </reaction>
</comment>
<comment type="subcellular location">
    <subcellularLocation>
        <location evidence="1">Cytoplasm</location>
    </subcellularLocation>
    <text evidence="1">Component of the nuage, also named P granule, a germ-cell-specific organelle required to repress transposon during meiosis.</text>
</comment>
<comment type="similarity">
    <text evidence="6">Belongs to the DEAD box helicase family. DEAH subfamily.</text>
</comment>